<accession>O59718</accession>
<protein>
    <recommendedName>
        <fullName>Nuclear envelope morphology protein 1</fullName>
        <ecNumber>3.1.3.16</ecNumber>
    </recommendedName>
</protein>
<dbReference type="EC" id="3.1.3.16"/>
<dbReference type="EMBL" id="CU329671">
    <property type="protein sequence ID" value="CAA18299.1"/>
    <property type="molecule type" value="Genomic_DNA"/>
</dbReference>
<dbReference type="PIR" id="T40330">
    <property type="entry name" value="T40330"/>
</dbReference>
<dbReference type="RefSeq" id="NP_596404.1">
    <property type="nucleotide sequence ID" value="NM_001022323.2"/>
</dbReference>
<dbReference type="SMR" id="O59718"/>
<dbReference type="BioGRID" id="277536">
    <property type="interactions" value="98"/>
</dbReference>
<dbReference type="FunCoup" id="O59718">
    <property type="interactions" value="20"/>
</dbReference>
<dbReference type="STRING" id="284812.O59718"/>
<dbReference type="GlyCosmos" id="O59718">
    <property type="glycosylation" value="4 sites, No reported glycans"/>
</dbReference>
<dbReference type="iPTMnet" id="O59718"/>
<dbReference type="PaxDb" id="4896-SPBC3B8.10c.1"/>
<dbReference type="EnsemblFungi" id="SPBC3B8.10c.1">
    <property type="protein sequence ID" value="SPBC3B8.10c.1:pep"/>
    <property type="gene ID" value="SPBC3B8.10c"/>
</dbReference>
<dbReference type="GeneID" id="2541021"/>
<dbReference type="KEGG" id="spo:2541021"/>
<dbReference type="PomBase" id="SPBC3B8.10c">
    <property type="gene designation" value="nem1"/>
</dbReference>
<dbReference type="VEuPathDB" id="FungiDB:SPBC3B8.10c"/>
<dbReference type="eggNOG" id="KOG1605">
    <property type="taxonomic scope" value="Eukaryota"/>
</dbReference>
<dbReference type="HOGENOM" id="CLU_020262_7_0_1"/>
<dbReference type="InParanoid" id="O59718"/>
<dbReference type="OMA" id="LYYIHKR"/>
<dbReference type="PhylomeDB" id="O59718"/>
<dbReference type="Reactome" id="R-SPO-4419969">
    <property type="pathway name" value="Depolymerization of the Nuclear Lamina"/>
</dbReference>
<dbReference type="PRO" id="PR:O59718"/>
<dbReference type="Proteomes" id="UP000002485">
    <property type="component" value="Chromosome II"/>
</dbReference>
<dbReference type="GO" id="GO:0005783">
    <property type="term" value="C:endoplasmic reticulum"/>
    <property type="evidence" value="ECO:0007005"/>
    <property type="project" value="PomBase"/>
</dbReference>
<dbReference type="GO" id="GO:0005789">
    <property type="term" value="C:endoplasmic reticulum membrane"/>
    <property type="evidence" value="ECO:0007669"/>
    <property type="project" value="UniProtKB-SubCell"/>
</dbReference>
<dbReference type="GO" id="GO:0071595">
    <property type="term" value="C:Nem1-Spo7 phosphatase complex"/>
    <property type="evidence" value="ECO:0000266"/>
    <property type="project" value="PomBase"/>
</dbReference>
<dbReference type="GO" id="GO:0031965">
    <property type="term" value="C:nuclear membrane"/>
    <property type="evidence" value="ECO:0007669"/>
    <property type="project" value="UniProtKB-SubCell"/>
</dbReference>
<dbReference type="GO" id="GO:0005634">
    <property type="term" value="C:nucleus"/>
    <property type="evidence" value="ECO:0000314"/>
    <property type="project" value="PomBase"/>
</dbReference>
<dbReference type="GO" id="GO:0004722">
    <property type="term" value="F:protein serine/threonine phosphatase activity"/>
    <property type="evidence" value="ECO:0000318"/>
    <property type="project" value="GO_Central"/>
</dbReference>
<dbReference type="GO" id="GO:0019915">
    <property type="term" value="P:lipid storage"/>
    <property type="evidence" value="ECO:0000315"/>
    <property type="project" value="PomBase"/>
</dbReference>
<dbReference type="GO" id="GO:0071072">
    <property type="term" value="P:negative regulation of phospholipid biosynthetic process"/>
    <property type="evidence" value="ECO:0000266"/>
    <property type="project" value="PomBase"/>
</dbReference>
<dbReference type="GO" id="GO:0071763">
    <property type="term" value="P:nuclear membrane organization"/>
    <property type="evidence" value="ECO:0000315"/>
    <property type="project" value="PomBase"/>
</dbReference>
<dbReference type="GO" id="GO:0023052">
    <property type="term" value="P:signaling"/>
    <property type="evidence" value="ECO:0000303"/>
    <property type="project" value="PomBase"/>
</dbReference>
<dbReference type="CDD" id="cd07521">
    <property type="entry name" value="HAD_FCP1-like"/>
    <property type="match status" value="1"/>
</dbReference>
<dbReference type="FunFam" id="3.40.50.1000:FF:000093">
    <property type="entry name" value="NLI interacting factor-like phosphatase family protein"/>
    <property type="match status" value="1"/>
</dbReference>
<dbReference type="Gene3D" id="3.40.50.1000">
    <property type="entry name" value="HAD superfamily/HAD-like"/>
    <property type="match status" value="1"/>
</dbReference>
<dbReference type="InterPro" id="IPR011948">
    <property type="entry name" value="Dullard_phosphatase"/>
</dbReference>
<dbReference type="InterPro" id="IPR004274">
    <property type="entry name" value="FCP1_dom"/>
</dbReference>
<dbReference type="InterPro" id="IPR036412">
    <property type="entry name" value="HAD-like_sf"/>
</dbReference>
<dbReference type="InterPro" id="IPR023214">
    <property type="entry name" value="HAD_sf"/>
</dbReference>
<dbReference type="InterPro" id="IPR050365">
    <property type="entry name" value="TIM50"/>
</dbReference>
<dbReference type="NCBIfam" id="TIGR02251">
    <property type="entry name" value="HIF-SF_euk"/>
    <property type="match status" value="1"/>
</dbReference>
<dbReference type="PANTHER" id="PTHR12210">
    <property type="entry name" value="DULLARD PROTEIN PHOSPHATASE"/>
    <property type="match status" value="1"/>
</dbReference>
<dbReference type="Pfam" id="PF03031">
    <property type="entry name" value="NIF"/>
    <property type="match status" value="1"/>
</dbReference>
<dbReference type="SMART" id="SM00577">
    <property type="entry name" value="CPDc"/>
    <property type="match status" value="1"/>
</dbReference>
<dbReference type="SUPFAM" id="SSF56784">
    <property type="entry name" value="HAD-like"/>
    <property type="match status" value="1"/>
</dbReference>
<dbReference type="PROSITE" id="PS50969">
    <property type="entry name" value="FCP1"/>
    <property type="match status" value="1"/>
</dbReference>
<feature type="chain" id="PRO_0000315975" description="Nuclear envelope morphology protein 1">
    <location>
        <begin position="1"/>
        <end position="476"/>
    </location>
</feature>
<feature type="transmembrane region" description="Helical" evidence="2">
    <location>
        <begin position="123"/>
        <end position="139"/>
    </location>
</feature>
<feature type="domain" description="FCP1 homology" evidence="3">
    <location>
        <begin position="299"/>
        <end position="460"/>
    </location>
</feature>
<feature type="region of interest" description="Disordered" evidence="4">
    <location>
        <begin position="47"/>
        <end position="74"/>
    </location>
</feature>
<feature type="region of interest" description="Disordered" evidence="4">
    <location>
        <begin position="164"/>
        <end position="190"/>
    </location>
</feature>
<feature type="region of interest" description="Disordered" evidence="4">
    <location>
        <begin position="232"/>
        <end position="256"/>
    </location>
</feature>
<feature type="compositionally biased region" description="Low complexity" evidence="4">
    <location>
        <begin position="51"/>
        <end position="62"/>
    </location>
</feature>
<feature type="compositionally biased region" description="Basic and acidic residues" evidence="4">
    <location>
        <begin position="64"/>
        <end position="74"/>
    </location>
</feature>
<feature type="compositionally biased region" description="Polar residues" evidence="4">
    <location>
        <begin position="234"/>
        <end position="256"/>
    </location>
</feature>
<feature type="glycosylation site" description="N-linked (GlcNAc...) asparagine" evidence="2">
    <location>
        <position position="237"/>
    </location>
</feature>
<feature type="glycosylation site" description="N-linked (GlcNAc...) asparagine" evidence="2">
    <location>
        <position position="257"/>
    </location>
</feature>
<feature type="glycosylation site" description="N-linked (GlcNAc...) asparagine" evidence="2">
    <location>
        <position position="284"/>
    </location>
</feature>
<feature type="glycosylation site" description="N-linked (GlcNAc...) asparagine" evidence="2">
    <location>
        <position position="356"/>
    </location>
</feature>
<comment type="function">
    <text evidence="1">Catalytic component of the nem1-spo7 complex which acts as a phosphatase and may be required for proper nuclear membrane morphology.</text>
</comment>
<comment type="catalytic activity">
    <reaction>
        <text>O-phospho-L-seryl-[protein] + H2O = L-seryl-[protein] + phosphate</text>
        <dbReference type="Rhea" id="RHEA:20629"/>
        <dbReference type="Rhea" id="RHEA-COMP:9863"/>
        <dbReference type="Rhea" id="RHEA-COMP:11604"/>
        <dbReference type="ChEBI" id="CHEBI:15377"/>
        <dbReference type="ChEBI" id="CHEBI:29999"/>
        <dbReference type="ChEBI" id="CHEBI:43474"/>
        <dbReference type="ChEBI" id="CHEBI:83421"/>
        <dbReference type="EC" id="3.1.3.16"/>
    </reaction>
</comment>
<comment type="catalytic activity">
    <reaction>
        <text>O-phospho-L-threonyl-[protein] + H2O = L-threonyl-[protein] + phosphate</text>
        <dbReference type="Rhea" id="RHEA:47004"/>
        <dbReference type="Rhea" id="RHEA-COMP:11060"/>
        <dbReference type="Rhea" id="RHEA-COMP:11605"/>
        <dbReference type="ChEBI" id="CHEBI:15377"/>
        <dbReference type="ChEBI" id="CHEBI:30013"/>
        <dbReference type="ChEBI" id="CHEBI:43474"/>
        <dbReference type="ChEBI" id="CHEBI:61977"/>
        <dbReference type="EC" id="3.1.3.16"/>
    </reaction>
</comment>
<comment type="subunit">
    <text evidence="1">Component of the nem1-spo7 complex.</text>
</comment>
<comment type="subcellular location">
    <subcellularLocation>
        <location evidence="5">Endoplasmic reticulum membrane</location>
        <topology evidence="5">Single-pass membrane protein</topology>
    </subcellularLocation>
    <subcellularLocation>
        <location evidence="1">Nucleus membrane</location>
        <topology evidence="1">Single-pass membrane protein</topology>
    </subcellularLocation>
</comment>
<comment type="similarity">
    <text evidence="6">Belongs to the Dullard family.</text>
</comment>
<name>NEM1_SCHPO</name>
<proteinExistence type="inferred from homology"/>
<sequence length="476" mass="54598">MNSIARLSDEINKAILATPLDDDEADKEKLANARGRASSATLRHYNRRRSSYSASSLSSLSSKPTEKEVPTRNEKPKHANIMRVVVYWIRVFLKRIYTFFVHSARVFLYHFLNEEKEFTLASFFWGLCRFVFFPVLLSYKRREMLPPQPSVRRPRFYSSYSYPSSHQDPAYSSFKRHRSSNSYSSSSNGNHVRFQPSIAEEEISFNSFSNSLNSEEDVCVSPMKPKEVSLMGKANSNRSGHSHQPQSTQFSPPANDNISKLPSSFTIVNDPLKSPSSSRLRIRNITLCADKIPRPLLNSKLPRKTLVLDLDETLIHSVSRGSRTTSGQPIEVHVPGEHPILYYIHKRPHLDYFLSNVSQWFRLILFTASVQPYADPIIDYLERDKKIFAKRYYRQHCALVDSSFVKDISICNIHLSRIMIIDNSPASYNAHKENAIPIEGWISDPSDVDLLNLLSFLHALQYVHDVRDLLGLRLAK</sequence>
<organism>
    <name type="scientific">Schizosaccharomyces pombe (strain 972 / ATCC 24843)</name>
    <name type="common">Fission yeast</name>
    <dbReference type="NCBI Taxonomy" id="284812"/>
    <lineage>
        <taxon>Eukaryota</taxon>
        <taxon>Fungi</taxon>
        <taxon>Dikarya</taxon>
        <taxon>Ascomycota</taxon>
        <taxon>Taphrinomycotina</taxon>
        <taxon>Schizosaccharomycetes</taxon>
        <taxon>Schizosaccharomycetales</taxon>
        <taxon>Schizosaccharomycetaceae</taxon>
        <taxon>Schizosaccharomyces</taxon>
    </lineage>
</organism>
<reference key="1">
    <citation type="journal article" date="2002" name="Nature">
        <title>The genome sequence of Schizosaccharomyces pombe.</title>
        <authorList>
            <person name="Wood V."/>
            <person name="Gwilliam R."/>
            <person name="Rajandream M.A."/>
            <person name="Lyne M.H."/>
            <person name="Lyne R."/>
            <person name="Stewart A."/>
            <person name="Sgouros J.G."/>
            <person name="Peat N."/>
            <person name="Hayles J."/>
            <person name="Baker S.G."/>
            <person name="Basham D."/>
            <person name="Bowman S."/>
            <person name="Brooks K."/>
            <person name="Brown D."/>
            <person name="Brown S."/>
            <person name="Chillingworth T."/>
            <person name="Churcher C.M."/>
            <person name="Collins M."/>
            <person name="Connor R."/>
            <person name="Cronin A."/>
            <person name="Davis P."/>
            <person name="Feltwell T."/>
            <person name="Fraser A."/>
            <person name="Gentles S."/>
            <person name="Goble A."/>
            <person name="Hamlin N."/>
            <person name="Harris D.E."/>
            <person name="Hidalgo J."/>
            <person name="Hodgson G."/>
            <person name="Holroyd S."/>
            <person name="Hornsby T."/>
            <person name="Howarth S."/>
            <person name="Huckle E.J."/>
            <person name="Hunt S."/>
            <person name="Jagels K."/>
            <person name="James K.D."/>
            <person name="Jones L."/>
            <person name="Jones M."/>
            <person name="Leather S."/>
            <person name="McDonald S."/>
            <person name="McLean J."/>
            <person name="Mooney P."/>
            <person name="Moule S."/>
            <person name="Mungall K.L."/>
            <person name="Murphy L.D."/>
            <person name="Niblett D."/>
            <person name="Odell C."/>
            <person name="Oliver K."/>
            <person name="O'Neil S."/>
            <person name="Pearson D."/>
            <person name="Quail M.A."/>
            <person name="Rabbinowitsch E."/>
            <person name="Rutherford K.M."/>
            <person name="Rutter S."/>
            <person name="Saunders D."/>
            <person name="Seeger K."/>
            <person name="Sharp S."/>
            <person name="Skelton J."/>
            <person name="Simmonds M.N."/>
            <person name="Squares R."/>
            <person name="Squares S."/>
            <person name="Stevens K."/>
            <person name="Taylor K."/>
            <person name="Taylor R.G."/>
            <person name="Tivey A."/>
            <person name="Walsh S.V."/>
            <person name="Warren T."/>
            <person name="Whitehead S."/>
            <person name="Woodward J.R."/>
            <person name="Volckaert G."/>
            <person name="Aert R."/>
            <person name="Robben J."/>
            <person name="Grymonprez B."/>
            <person name="Weltjens I."/>
            <person name="Vanstreels E."/>
            <person name="Rieger M."/>
            <person name="Schaefer M."/>
            <person name="Mueller-Auer S."/>
            <person name="Gabel C."/>
            <person name="Fuchs M."/>
            <person name="Duesterhoeft A."/>
            <person name="Fritzc C."/>
            <person name="Holzer E."/>
            <person name="Moestl D."/>
            <person name="Hilbert H."/>
            <person name="Borzym K."/>
            <person name="Langer I."/>
            <person name="Beck A."/>
            <person name="Lehrach H."/>
            <person name="Reinhardt R."/>
            <person name="Pohl T.M."/>
            <person name="Eger P."/>
            <person name="Zimmermann W."/>
            <person name="Wedler H."/>
            <person name="Wambutt R."/>
            <person name="Purnelle B."/>
            <person name="Goffeau A."/>
            <person name="Cadieu E."/>
            <person name="Dreano S."/>
            <person name="Gloux S."/>
            <person name="Lelaure V."/>
            <person name="Mottier S."/>
            <person name="Galibert F."/>
            <person name="Aves S.J."/>
            <person name="Xiang Z."/>
            <person name="Hunt C."/>
            <person name="Moore K."/>
            <person name="Hurst S.M."/>
            <person name="Lucas M."/>
            <person name="Rochet M."/>
            <person name="Gaillardin C."/>
            <person name="Tallada V.A."/>
            <person name="Garzon A."/>
            <person name="Thode G."/>
            <person name="Daga R.R."/>
            <person name="Cruzado L."/>
            <person name="Jimenez J."/>
            <person name="Sanchez M."/>
            <person name="del Rey F."/>
            <person name="Benito J."/>
            <person name="Dominguez A."/>
            <person name="Revuelta J.L."/>
            <person name="Moreno S."/>
            <person name="Armstrong J."/>
            <person name="Forsburg S.L."/>
            <person name="Cerutti L."/>
            <person name="Lowe T."/>
            <person name="McCombie W.R."/>
            <person name="Paulsen I."/>
            <person name="Potashkin J."/>
            <person name="Shpakovski G.V."/>
            <person name="Ussery D."/>
            <person name="Barrell B.G."/>
            <person name="Nurse P."/>
        </authorList>
    </citation>
    <scope>NUCLEOTIDE SEQUENCE [LARGE SCALE GENOMIC DNA]</scope>
    <source>
        <strain>972 / ATCC 24843</strain>
    </source>
</reference>
<reference key="2">
    <citation type="journal article" date="2006" name="Nat. Biotechnol.">
        <title>ORFeome cloning and global analysis of protein localization in the fission yeast Schizosaccharomyces pombe.</title>
        <authorList>
            <person name="Matsuyama A."/>
            <person name="Arai R."/>
            <person name="Yashiroda Y."/>
            <person name="Shirai A."/>
            <person name="Kamata A."/>
            <person name="Sekido S."/>
            <person name="Kobayashi Y."/>
            <person name="Hashimoto A."/>
            <person name="Hamamoto M."/>
            <person name="Hiraoka Y."/>
            <person name="Horinouchi S."/>
            <person name="Yoshida M."/>
        </authorList>
    </citation>
    <scope>SUBCELLULAR LOCATION [LARGE SCALE ANALYSIS]</scope>
</reference>
<gene>
    <name type="primary">nem1</name>
    <name type="ORF">SPBC3B8.10c</name>
</gene>
<keyword id="KW-0256">Endoplasmic reticulum</keyword>
<keyword id="KW-0325">Glycoprotein</keyword>
<keyword id="KW-0378">Hydrolase</keyword>
<keyword id="KW-0472">Membrane</keyword>
<keyword id="KW-0539">Nucleus</keyword>
<keyword id="KW-0904">Protein phosphatase</keyword>
<keyword id="KW-1185">Reference proteome</keyword>
<keyword id="KW-0812">Transmembrane</keyword>
<keyword id="KW-1133">Transmembrane helix</keyword>
<evidence type="ECO:0000250" key="1"/>
<evidence type="ECO:0000255" key="2"/>
<evidence type="ECO:0000255" key="3">
    <source>
        <dbReference type="PROSITE-ProRule" id="PRU00336"/>
    </source>
</evidence>
<evidence type="ECO:0000256" key="4">
    <source>
        <dbReference type="SAM" id="MobiDB-lite"/>
    </source>
</evidence>
<evidence type="ECO:0000269" key="5">
    <source>
    </source>
</evidence>
<evidence type="ECO:0000305" key="6"/>